<comment type="function">
    <text evidence="1 2">Catalyzes the phosphorylation of D-fructose 6-phosphate to fructose 1,6-bisphosphate by ATP, the first committing step of glycolysis.</text>
</comment>
<comment type="catalytic activity">
    <reaction evidence="1 2 3">
        <text>beta-D-fructose 6-phosphate + ATP = beta-D-fructose 1,6-bisphosphate + ADP + H(+)</text>
        <dbReference type="Rhea" id="RHEA:16109"/>
        <dbReference type="ChEBI" id="CHEBI:15378"/>
        <dbReference type="ChEBI" id="CHEBI:30616"/>
        <dbReference type="ChEBI" id="CHEBI:32966"/>
        <dbReference type="ChEBI" id="CHEBI:57634"/>
        <dbReference type="ChEBI" id="CHEBI:456216"/>
        <dbReference type="EC" id="2.7.1.11"/>
    </reaction>
</comment>
<comment type="cofactor">
    <cofactor evidence="1">
        <name>Mg(2+)</name>
        <dbReference type="ChEBI" id="CHEBI:18420"/>
    </cofactor>
</comment>
<comment type="activity regulation">
    <text evidence="1">Allosterically activated by AMP.</text>
</comment>
<comment type="biophysicochemical properties">
    <kinetics>
        <KM evidence="2">0.0125 mM for ATP</KM>
    </kinetics>
</comment>
<comment type="pathway">
    <text evidence="1">Carbohydrate degradation; glycolysis; D-glyceraldehyde 3-phosphate and glycerone phosphate from D-glucose: step 3/4.</text>
</comment>
<comment type="subunit">
    <text evidence="1">Homotetramer.</text>
</comment>
<comment type="subcellular location">
    <subcellularLocation>
        <location evidence="1 2">Glycosome</location>
    </subcellularLocation>
</comment>
<comment type="similarity">
    <text evidence="1">Belongs to the phosphofructokinase type A (PFKA) family. PPi-dependent PFK group II subfamily. Atypical ATP-dependent clade 'X' sub-subfamily.</text>
</comment>
<feature type="chain" id="PRO_0000429724" description="ATP-dependent 6-phosphofructokinase">
    <location>
        <begin position="1"/>
        <end position="485"/>
    </location>
</feature>
<feature type="short sequence motif" description="Peroxisomal targeting signal" evidence="1">
    <location>
        <begin position="483"/>
        <end position="485"/>
    </location>
</feature>
<feature type="active site" description="Proton acceptor" evidence="1">
    <location>
        <position position="227"/>
    </location>
</feature>
<feature type="binding site" evidence="1">
    <location>
        <position position="105"/>
    </location>
    <ligand>
        <name>ATP</name>
        <dbReference type="ChEBI" id="CHEBI:30616"/>
    </ligand>
</feature>
<feature type="binding site" evidence="1">
    <location>
        <begin position="171"/>
        <end position="172"/>
    </location>
    <ligand>
        <name>ATP</name>
        <dbReference type="ChEBI" id="CHEBI:30616"/>
    </ligand>
</feature>
<feature type="binding site" evidence="1">
    <location>
        <begin position="196"/>
        <end position="199"/>
    </location>
    <ligand>
        <name>ATP</name>
        <dbReference type="ChEBI" id="CHEBI:30616"/>
    </ligand>
</feature>
<feature type="binding site" evidence="1">
    <location>
        <position position="197"/>
    </location>
    <ligand>
        <name>Mg(2+)</name>
        <dbReference type="ChEBI" id="CHEBI:18420"/>
        <note>catalytic</note>
    </ligand>
</feature>
<feature type="binding site" evidence="1">
    <location>
        <begin position="225"/>
        <end position="227"/>
    </location>
    <ligand>
        <name>substrate</name>
    </ligand>
</feature>
<feature type="binding site" evidence="1">
    <location>
        <begin position="270"/>
        <end position="272"/>
    </location>
    <ligand>
        <name>substrate</name>
    </ligand>
</feature>
<feature type="binding site" evidence="1">
    <location>
        <position position="323"/>
    </location>
    <ligand>
        <name>substrate</name>
    </ligand>
</feature>
<feature type="binding site" evidence="1">
    <location>
        <begin position="378"/>
        <end position="381"/>
    </location>
    <ligand>
        <name>substrate</name>
    </ligand>
</feature>
<feature type="site" description="Important for substrate specificity; cannot use PPi as phosphoryl donor" evidence="1">
    <location>
        <position position="198"/>
    </location>
</feature>
<evidence type="ECO:0000255" key="1">
    <source>
        <dbReference type="HAMAP-Rule" id="MF_03186"/>
    </source>
</evidence>
<evidence type="ECO:0000269" key="2">
    <source>
    </source>
</evidence>
<evidence type="ECO:0000269" key="3">
    <source>
    </source>
</evidence>
<proteinExistence type="evidence at protein level"/>
<organism>
    <name type="scientific">Trypanosoma cruzi (strain CL Brener)</name>
    <dbReference type="NCBI Taxonomy" id="353153"/>
    <lineage>
        <taxon>Eukaryota</taxon>
        <taxon>Discoba</taxon>
        <taxon>Euglenozoa</taxon>
        <taxon>Kinetoplastea</taxon>
        <taxon>Metakinetoplastina</taxon>
        <taxon>Trypanosomatida</taxon>
        <taxon>Trypanosomatidae</taxon>
        <taxon>Trypanosoma</taxon>
        <taxon>Schizotrypanum</taxon>
    </lineage>
</organism>
<keyword id="KW-0021">Allosteric enzyme</keyword>
<keyword id="KW-0067">ATP-binding</keyword>
<keyword id="KW-0324">Glycolysis</keyword>
<keyword id="KW-0327">Glycosome</keyword>
<keyword id="KW-0418">Kinase</keyword>
<keyword id="KW-0460">Magnesium</keyword>
<keyword id="KW-0479">Metal-binding</keyword>
<keyword id="KW-0547">Nucleotide-binding</keyword>
<keyword id="KW-0576">Peroxisome</keyword>
<keyword id="KW-1185">Reference proteome</keyword>
<keyword id="KW-0808">Transferase</keyword>
<gene>
    <name evidence="1" type="primary">pfk</name>
    <name type="ORF">Tc00.1047053508153.340</name>
</gene>
<dbReference type="EC" id="2.7.1.11" evidence="1"/>
<dbReference type="EMBL" id="AAHK01000001">
    <property type="protein sequence ID" value="EAO00202.1"/>
    <property type="molecule type" value="Genomic_DNA"/>
</dbReference>
<dbReference type="RefSeq" id="XP_822053.1">
    <property type="nucleotide sequence ID" value="XM_816960.1"/>
</dbReference>
<dbReference type="SMR" id="Q4E657"/>
<dbReference type="STRING" id="353153.Q4E657"/>
<dbReference type="BindingDB" id="Q4E657"/>
<dbReference type="ChEMBL" id="CHEMBL3108659"/>
<dbReference type="PaxDb" id="353153-Q4E657"/>
<dbReference type="EnsemblProtists" id="EAO00202">
    <property type="protein sequence ID" value="EAO00202"/>
    <property type="gene ID" value="Tc00.1047053508153.340"/>
</dbReference>
<dbReference type="GeneID" id="3555118"/>
<dbReference type="KEGG" id="tcr:508153.340"/>
<dbReference type="eggNOG" id="KOG2440">
    <property type="taxonomic scope" value="Eukaryota"/>
</dbReference>
<dbReference type="InParanoid" id="Q4E657"/>
<dbReference type="OMA" id="DYCIGFS"/>
<dbReference type="BRENDA" id="2.7.1.11">
    <property type="organism ID" value="6524"/>
</dbReference>
<dbReference type="SABIO-RK" id="Q4E657"/>
<dbReference type="UniPathway" id="UPA00109">
    <property type="reaction ID" value="UER00182"/>
</dbReference>
<dbReference type="Proteomes" id="UP000002296">
    <property type="component" value="Unassembled WGS sequence"/>
</dbReference>
<dbReference type="GO" id="GO:0020015">
    <property type="term" value="C:glycosome"/>
    <property type="evidence" value="ECO:0007669"/>
    <property type="project" value="UniProtKB-SubCell"/>
</dbReference>
<dbReference type="GO" id="GO:0003872">
    <property type="term" value="F:6-phosphofructokinase activity"/>
    <property type="evidence" value="ECO:0007669"/>
    <property type="project" value="UniProtKB-UniRule"/>
</dbReference>
<dbReference type="GO" id="GO:0005524">
    <property type="term" value="F:ATP binding"/>
    <property type="evidence" value="ECO:0007669"/>
    <property type="project" value="UniProtKB-KW"/>
</dbReference>
<dbReference type="GO" id="GO:0046872">
    <property type="term" value="F:metal ion binding"/>
    <property type="evidence" value="ECO:0007669"/>
    <property type="project" value="UniProtKB-KW"/>
</dbReference>
<dbReference type="GO" id="GO:0006002">
    <property type="term" value="P:fructose 6-phosphate metabolic process"/>
    <property type="evidence" value="ECO:0007669"/>
    <property type="project" value="InterPro"/>
</dbReference>
<dbReference type="FunFam" id="3.40.50.450:FF:000002">
    <property type="entry name" value="ATP-dependent 6-phosphofructokinase"/>
    <property type="match status" value="1"/>
</dbReference>
<dbReference type="Gene3D" id="3.40.50.450">
    <property type="match status" value="1"/>
</dbReference>
<dbReference type="HAMAP" id="MF_01981">
    <property type="entry name" value="Phosphofructokinase_II_X"/>
    <property type="match status" value="1"/>
</dbReference>
<dbReference type="InterPro" id="IPR022953">
    <property type="entry name" value="ATP_PFK"/>
</dbReference>
<dbReference type="InterPro" id="IPR050929">
    <property type="entry name" value="PFKA"/>
</dbReference>
<dbReference type="InterPro" id="IPR000023">
    <property type="entry name" value="Phosphofructokinase_dom"/>
</dbReference>
<dbReference type="InterPro" id="IPR035966">
    <property type="entry name" value="PKF_sf"/>
</dbReference>
<dbReference type="InterPro" id="IPR012004">
    <property type="entry name" value="PyroP-dep_PFK_TP0108"/>
</dbReference>
<dbReference type="NCBIfam" id="NF005301">
    <property type="entry name" value="PRK06830.1"/>
    <property type="match status" value="1"/>
</dbReference>
<dbReference type="PANTHER" id="PTHR45770">
    <property type="entry name" value="ATP-DEPENDENT 6-PHOSPHOFRUCTOKINASE 1"/>
    <property type="match status" value="1"/>
</dbReference>
<dbReference type="Pfam" id="PF00365">
    <property type="entry name" value="PFK"/>
    <property type="match status" value="1"/>
</dbReference>
<dbReference type="PRINTS" id="PR00476">
    <property type="entry name" value="PHFRCTKINASE"/>
</dbReference>
<dbReference type="SUPFAM" id="SSF53784">
    <property type="entry name" value="Phosphofructokinase"/>
    <property type="match status" value="1"/>
</dbReference>
<protein>
    <recommendedName>
        <fullName evidence="1">ATP-dependent 6-phosphofructokinase</fullName>
        <shortName evidence="1">ATP-PFK</shortName>
        <shortName evidence="1">Phosphofructokinase</shortName>
        <ecNumber evidence="1">2.7.1.11</ecNumber>
    </recommendedName>
    <alternativeName>
        <fullName evidence="1">Phosphohexokinase</fullName>
    </alternativeName>
</protein>
<sequence length="485" mass="53566">MENRLRDTSRVVRSHAAPLNEVTQEDLKVERLHGRKYMNPSKKHVMREEFSDKIEHIMHDPRPQEGVHSELPVSISPLLCELAAPRQRIHFNPPETVVGIVTCGGICPGLNDVIRSLTLTAVNAYRVKRVIGFRFGYWGLSKKGSHTAMELYRTSVTSIHRYGGTILGSSRGPQDTSEMVDTLERLGVNILFTVGGDGTQRGALKIAEEAKRRGANLAVFGIPKTIDNDLSFSHRTFGFETAVDKAVEAVRAAYAEAISLNYGVGVVKLMGRDSGFIAAEAAVASAQANICLVPENPISEDIVMALIQRRFETSRSCVIIVAEGFGQDWEGGTGGHDASGNKKLTDIGVVLTKRIQAWLRKNKERYPNGTVKYIDPSYMIRACPPSANDALFCATLSTLAMHEAMAGATNCIIALRYNSYILVPIKVATSVRRVLDLRGQLWRQVREITVGLQDDVRAFKEAEVRRELEAISLVRERLIGQLSKL</sequence>
<reference key="1">
    <citation type="journal article" date="2005" name="Science">
        <title>The genome sequence of Trypanosoma cruzi, etiologic agent of Chagas disease.</title>
        <authorList>
            <person name="El-Sayed N.M.A."/>
            <person name="Myler P.J."/>
            <person name="Bartholomeu D.C."/>
            <person name="Nilsson D."/>
            <person name="Aggarwal G."/>
            <person name="Tran A.-N."/>
            <person name="Ghedin E."/>
            <person name="Worthey E.A."/>
            <person name="Delcher A.L."/>
            <person name="Blandin G."/>
            <person name="Westenberger S.J."/>
            <person name="Caler E."/>
            <person name="Cerqueira G.C."/>
            <person name="Branche C."/>
            <person name="Haas B."/>
            <person name="Anupama A."/>
            <person name="Arner E."/>
            <person name="Aslund L."/>
            <person name="Attipoe P."/>
            <person name="Bontempi E."/>
            <person name="Bringaud F."/>
            <person name="Burton P."/>
            <person name="Cadag E."/>
            <person name="Campbell D.A."/>
            <person name="Carrington M."/>
            <person name="Crabtree J."/>
            <person name="Darban H."/>
            <person name="da Silveira J.F."/>
            <person name="de Jong P."/>
            <person name="Edwards K."/>
            <person name="Englund P.T."/>
            <person name="Fazelina G."/>
            <person name="Feldblyum T."/>
            <person name="Ferella M."/>
            <person name="Frasch A.C."/>
            <person name="Gull K."/>
            <person name="Horn D."/>
            <person name="Hou L."/>
            <person name="Huang Y."/>
            <person name="Kindlund E."/>
            <person name="Klingbeil M."/>
            <person name="Kluge S."/>
            <person name="Koo H."/>
            <person name="Lacerda D."/>
            <person name="Levin M.J."/>
            <person name="Lorenzi H."/>
            <person name="Louie T."/>
            <person name="Machado C.R."/>
            <person name="McCulloch R."/>
            <person name="McKenna A."/>
            <person name="Mizuno Y."/>
            <person name="Mottram J.C."/>
            <person name="Nelson S."/>
            <person name="Ochaya S."/>
            <person name="Osoegawa K."/>
            <person name="Pai G."/>
            <person name="Parsons M."/>
            <person name="Pentony M."/>
            <person name="Pettersson U."/>
            <person name="Pop M."/>
            <person name="Ramirez J.L."/>
            <person name="Rinta J."/>
            <person name="Robertson L."/>
            <person name="Salzberg S.L."/>
            <person name="Sanchez D.O."/>
            <person name="Seyler A."/>
            <person name="Sharma R."/>
            <person name="Shetty J."/>
            <person name="Simpson A.J."/>
            <person name="Sisk E."/>
            <person name="Tammi M.T."/>
            <person name="Tarleton R."/>
            <person name="Teixeira S."/>
            <person name="Van Aken S."/>
            <person name="Vogt C."/>
            <person name="Ward P.N."/>
            <person name="Wickstead B."/>
            <person name="Wortman J."/>
            <person name="White O."/>
            <person name="Fraser C.M."/>
            <person name="Stuart K.D."/>
            <person name="Andersson B."/>
        </authorList>
    </citation>
    <scope>NUCLEOTIDE SEQUENCE [LARGE SCALE GENOMIC DNA]</scope>
    <source>
        <strain>CL Brener</strain>
    </source>
</reference>
<reference key="2">
    <citation type="journal article" date="1986" name="Mol. Biochem. Parasitol.">
        <title>The phosphofructokinase of Trypanosoma (Schizotrypanum) cruzi: purification and kinetic mechanism.</title>
        <authorList>
            <person name="Aguilar Z."/>
            <person name="Urbina J.A."/>
        </authorList>
    </citation>
    <scope>CATALYTIC ACTIVITY</scope>
</reference>
<reference key="3">
    <citation type="journal article" date="2009" name="Mem. Inst. Oswaldo Cruz">
        <title>Molecular and biochemical characterisation of Trypanosoma cruzi phosphofructokinase.</title>
        <authorList>
            <person name="Rodriguez E."/>
            <person name="Lander N."/>
            <person name="Ramirez J.L."/>
        </authorList>
    </citation>
    <scope>FUNCTION</scope>
    <scope>CATALYTIC ACTIVITY</scope>
    <scope>BIOPHYSICOCHEMICAL PROPERTIES</scope>
    <scope>SUBCELLULAR LOCATION</scope>
    <source>
        <strain>CL Brener</strain>
    </source>
</reference>
<accession>Q4E657</accession>
<name>PFKA_TRYCC</name>